<organism>
    <name type="scientific">Haemophilus influenzae (strain PittEE)</name>
    <dbReference type="NCBI Taxonomy" id="374930"/>
    <lineage>
        <taxon>Bacteria</taxon>
        <taxon>Pseudomonadati</taxon>
        <taxon>Pseudomonadota</taxon>
        <taxon>Gammaproteobacteria</taxon>
        <taxon>Pasteurellales</taxon>
        <taxon>Pasteurellaceae</taxon>
        <taxon>Haemophilus</taxon>
    </lineage>
</organism>
<evidence type="ECO:0000255" key="1">
    <source>
        <dbReference type="HAMAP-Rule" id="MF_00691"/>
    </source>
</evidence>
<proteinExistence type="inferred from homology"/>
<feature type="chain" id="PRO_1000045206" description="5-oxoprolinase subunit A">
    <location>
        <begin position="1"/>
        <end position="245"/>
    </location>
</feature>
<comment type="function">
    <text evidence="1">Catalyzes the cleavage of 5-oxoproline to form L-glutamate coupled to the hydrolysis of ATP to ADP and inorganic phosphate.</text>
</comment>
<comment type="catalytic activity">
    <reaction evidence="1">
        <text>5-oxo-L-proline + ATP + 2 H2O = L-glutamate + ADP + phosphate + H(+)</text>
        <dbReference type="Rhea" id="RHEA:10348"/>
        <dbReference type="ChEBI" id="CHEBI:15377"/>
        <dbReference type="ChEBI" id="CHEBI:15378"/>
        <dbReference type="ChEBI" id="CHEBI:29985"/>
        <dbReference type="ChEBI" id="CHEBI:30616"/>
        <dbReference type="ChEBI" id="CHEBI:43474"/>
        <dbReference type="ChEBI" id="CHEBI:58402"/>
        <dbReference type="ChEBI" id="CHEBI:456216"/>
        <dbReference type="EC" id="3.5.2.9"/>
    </reaction>
</comment>
<comment type="subunit">
    <text evidence="1">Forms a complex composed of PxpA, PxpB and PxpC.</text>
</comment>
<comment type="similarity">
    <text evidence="1">Belongs to the LamB/PxpA family.</text>
</comment>
<reference key="1">
    <citation type="journal article" date="2007" name="Genome Biol.">
        <title>Characterization and modeling of the Haemophilus influenzae core and supragenomes based on the complete genomic sequences of Rd and 12 clinical nontypeable strains.</title>
        <authorList>
            <person name="Hogg J.S."/>
            <person name="Hu F.Z."/>
            <person name="Janto B."/>
            <person name="Boissy R."/>
            <person name="Hayes J."/>
            <person name="Keefe R."/>
            <person name="Post J.C."/>
            <person name="Ehrlich G.D."/>
        </authorList>
    </citation>
    <scope>NUCLEOTIDE SEQUENCE [LARGE SCALE GENOMIC DNA]</scope>
    <source>
        <strain>PittEE</strain>
    </source>
</reference>
<sequence>MKKIDLNADIAEGFPFDESLLQLLSSANIACGLHAGGAKEMQSAVKFAKENKVRIGAHPSFPDRENFGRTAMALSSQELIAHLRYQLGALKAICDGEGAVISYVKPHGALYNQAAKDEKIARVIAQTVYQFDPNLKLMGLAGSLMLRIAEEEKLQTISEVFADRHYMPDGSLVPRSQPNAMVESDKEAIQQVLQMVTKGQVNAIDGSLVPVKAESICLHGDNQHSLQFAKRIVEELEKNHIKITA</sequence>
<name>PXPA_HAEIE</name>
<gene>
    <name evidence="1" type="primary">pxpA</name>
    <name type="ordered locus">CGSHiEE_03400</name>
</gene>
<keyword id="KW-0067">ATP-binding</keyword>
<keyword id="KW-0378">Hydrolase</keyword>
<keyword id="KW-0547">Nucleotide-binding</keyword>
<protein>
    <recommendedName>
        <fullName evidence="1">5-oxoprolinase subunit A</fullName>
        <shortName evidence="1">5-OPase subunit A</shortName>
        <ecNumber evidence="1">3.5.2.9</ecNumber>
    </recommendedName>
    <alternativeName>
        <fullName evidence="1">5-oxoprolinase (ATP-hydrolyzing) subunit A</fullName>
    </alternativeName>
</protein>
<dbReference type="EC" id="3.5.2.9" evidence="1"/>
<dbReference type="EMBL" id="CP000671">
    <property type="protein sequence ID" value="ABQ98103.1"/>
    <property type="molecule type" value="Genomic_DNA"/>
</dbReference>
<dbReference type="SMR" id="A5UBF2"/>
<dbReference type="KEGG" id="hip:CGSHiEE_03400"/>
<dbReference type="HOGENOM" id="CLU_069535_0_0_6"/>
<dbReference type="GO" id="GO:0017168">
    <property type="term" value="F:5-oxoprolinase (ATP-hydrolyzing) activity"/>
    <property type="evidence" value="ECO:0007669"/>
    <property type="project" value="UniProtKB-UniRule"/>
</dbReference>
<dbReference type="GO" id="GO:0005524">
    <property type="term" value="F:ATP binding"/>
    <property type="evidence" value="ECO:0007669"/>
    <property type="project" value="UniProtKB-UniRule"/>
</dbReference>
<dbReference type="GO" id="GO:0005975">
    <property type="term" value="P:carbohydrate metabolic process"/>
    <property type="evidence" value="ECO:0007669"/>
    <property type="project" value="InterPro"/>
</dbReference>
<dbReference type="CDD" id="cd10800">
    <property type="entry name" value="LamB_YcsF_YbgL_like"/>
    <property type="match status" value="1"/>
</dbReference>
<dbReference type="Gene3D" id="3.20.20.370">
    <property type="entry name" value="Glycoside hydrolase/deacetylase"/>
    <property type="match status" value="1"/>
</dbReference>
<dbReference type="HAMAP" id="MF_00691">
    <property type="entry name" value="PxpA"/>
    <property type="match status" value="1"/>
</dbReference>
<dbReference type="InterPro" id="IPR011330">
    <property type="entry name" value="Glyco_hydro/deAcase_b/a-brl"/>
</dbReference>
<dbReference type="InterPro" id="IPR005501">
    <property type="entry name" value="LamB/YcsF/PxpA-like"/>
</dbReference>
<dbReference type="NCBIfam" id="NF003814">
    <property type="entry name" value="PRK05406.1-3"/>
    <property type="match status" value="1"/>
</dbReference>
<dbReference type="NCBIfam" id="NF003815">
    <property type="entry name" value="PRK05406.1-4"/>
    <property type="match status" value="1"/>
</dbReference>
<dbReference type="NCBIfam" id="NF003816">
    <property type="entry name" value="PRK05406.1-5"/>
    <property type="match status" value="1"/>
</dbReference>
<dbReference type="PANTHER" id="PTHR30292:SF0">
    <property type="entry name" value="5-OXOPROLINASE SUBUNIT A"/>
    <property type="match status" value="1"/>
</dbReference>
<dbReference type="PANTHER" id="PTHR30292">
    <property type="entry name" value="UNCHARACTERIZED PROTEIN YBGL-RELATED"/>
    <property type="match status" value="1"/>
</dbReference>
<dbReference type="Pfam" id="PF03746">
    <property type="entry name" value="LamB_YcsF"/>
    <property type="match status" value="1"/>
</dbReference>
<dbReference type="SUPFAM" id="SSF88713">
    <property type="entry name" value="Glycoside hydrolase/deacetylase"/>
    <property type="match status" value="1"/>
</dbReference>
<accession>A5UBF2</accession>